<protein>
    <recommendedName>
        <fullName>Ubiquitin carboxyl-terminal hydrolase 13</fullName>
        <ecNumber>3.4.19.12</ecNumber>
    </recommendedName>
    <alternativeName>
        <fullName>Deubiquitinating enzyme 13</fullName>
    </alternativeName>
    <alternativeName>
        <fullName>Ubiquitin thioesterase 13</fullName>
    </alternativeName>
    <alternativeName>
        <fullName>Ubiquitin-specific-processing protease 13</fullName>
    </alternativeName>
</protein>
<accession>E1BMF7</accession>
<comment type="function">
    <text evidence="2">Deubiquitinase that mediates deubiquitination of target proteins such as BECN1, MITF, SKP2 and USP10 and is involved in various processes such as autophagy, endoplasmic reticulum-associated degradation (ERAD), cell cycle progression or DNA damage response. Component of a regulatory loop that controls autophagy and p53/TP53 levels: mediates deubiquitination of BECN1, a key regulator of autophagy, leading to stabilize the PIK3C3/VPS34-containing complexes. Alternatively, forms with NEDD4 a deubiquitination complex, which subsequently stabilizes VPS34 to promote autophagy. Also deubiquitinates USP10, an essential regulator of p53/TP53 stability. In turn, PIK3C3/VPS34-containing complexes regulate USP13 stability, suggesting the existence of a regulatory system by which PIK3C3/VPS34-containing complexes regulate p53/TP53 protein levels via USP10 and USP13. Recruited by nuclear UFD1 and mediates deubiquitination of SKP2, thereby regulating endoplasmic reticulum-associated degradation (ERAD). Also regulates ERAD through the deubiquitination of UBL4A a component of the BAG6/BAT3 complex. Mediates stabilization of SIAH2 independently of deubiquitinase activity: binds ubiquitinated SIAH2 and acts by impairing SIAH2 autoubiquitination. Regulates the cell cycle progression by stabilizing cell cycle proteins such as SKP2 and AURKB. In addition, plays an important role in maintaining genomic stability and in DNA replication checkpoint activation via regulation of RAP80 and TOPBP1. Deubiquitinates the multifunctional protein HMGB1 and subsequently drives its nucleocytoplasmic localization and its secretion. Positively regulates type I and type II interferon signalings by deubiquitinating STAT1 but negatively regulates antiviral response by deubiquitinating STING1.</text>
</comment>
<comment type="catalytic activity">
    <reaction evidence="2">
        <text>Thiol-dependent hydrolysis of ester, thioester, amide, peptide and isopeptide bonds formed by the C-terminal Gly of ubiquitin (a 76-residue protein attached to proteins as an intracellular targeting signal).</text>
        <dbReference type="EC" id="3.4.19.12"/>
    </reaction>
</comment>
<comment type="activity regulation">
    <text evidence="1">Specifically inhibited by spautin-1 (specific and potent autophagy inhibitor-1), a derivative of MBCQ that binds to USP13 and inhibits deubiquitinase activity. Regulated by PIK3C3/VPS34-containing complexes. The weak deubiquitinase activity in vitro suggests the existence of some mechanism that activates the enzyme (By similarity).</text>
</comment>
<comment type="subunit">
    <text evidence="2">Interacts with UFD1. Interacts (via UBA domains) with SIAH2 (when ubiquitinated). Interacts with BAG6; the interaction is direct and may mediate UBL4A deubiquitination. Interacts (via UBA 2 domain) with AMFR; the interaction is direct. Interacts with UBL4A; may be indirect via BAG6. Interacts with NEDD4.</text>
</comment>
<comment type="subcellular location">
    <subcellularLocation>
        <location evidence="2">Cytoplasm</location>
    </subcellularLocation>
</comment>
<comment type="domain">
    <text evidence="1">The UBP-type zinc finger has lost its ability to bind ubiquitin and USP13 is not activated by unanchored ubiquitin.</text>
</comment>
<comment type="domain">
    <text evidence="1">The UBA domains mediate binding to ubiquitin.</text>
</comment>
<comment type="similarity">
    <text evidence="7">Belongs to the peptidase C19 family.</text>
</comment>
<dbReference type="EC" id="3.4.19.12"/>
<dbReference type="EMBL" id="DAAA02001954">
    <property type="status" value="NOT_ANNOTATED_CDS"/>
    <property type="molecule type" value="Genomic_DNA"/>
</dbReference>
<dbReference type="EMBL" id="DAAA02001955">
    <property type="status" value="NOT_ANNOTATED_CDS"/>
    <property type="molecule type" value="Genomic_DNA"/>
</dbReference>
<dbReference type="EMBL" id="DAAA02001956">
    <property type="status" value="NOT_ANNOTATED_CDS"/>
    <property type="molecule type" value="Genomic_DNA"/>
</dbReference>
<dbReference type="EMBL" id="DAAA02001957">
    <property type="status" value="NOT_ANNOTATED_CDS"/>
    <property type="molecule type" value="Genomic_DNA"/>
</dbReference>
<dbReference type="EMBL" id="DAAA02001958">
    <property type="status" value="NOT_ANNOTATED_CDS"/>
    <property type="molecule type" value="Genomic_DNA"/>
</dbReference>
<dbReference type="RefSeq" id="NP_001178195.1">
    <property type="nucleotide sequence ID" value="NM_001191266.2"/>
</dbReference>
<dbReference type="BMRB" id="E1BMF7"/>
<dbReference type="SMR" id="E1BMF7"/>
<dbReference type="FunCoup" id="E1BMF7">
    <property type="interactions" value="2009"/>
</dbReference>
<dbReference type="STRING" id="9913.ENSBTAP00000053221"/>
<dbReference type="MEROPS" id="C19.012"/>
<dbReference type="PaxDb" id="9913-ENSBTAP00000053221"/>
<dbReference type="Ensembl" id="ENSBTAT00000061390.4">
    <property type="protein sequence ID" value="ENSBTAP00000053221.2"/>
    <property type="gene ID" value="ENSBTAG00000005946.8"/>
</dbReference>
<dbReference type="GeneID" id="100141289"/>
<dbReference type="KEGG" id="bta:100141289"/>
<dbReference type="CTD" id="8975"/>
<dbReference type="VEuPathDB" id="HostDB:ENSBTAG00000005946"/>
<dbReference type="VGNC" id="VGNC:52841">
    <property type="gene designation" value="USP13"/>
</dbReference>
<dbReference type="eggNOG" id="KOG0944">
    <property type="taxonomic scope" value="Eukaryota"/>
</dbReference>
<dbReference type="GeneTree" id="ENSGT00940000157401"/>
<dbReference type="HOGENOM" id="CLU_009884_1_0_1"/>
<dbReference type="InParanoid" id="E1BMF7"/>
<dbReference type="OMA" id="ASTECAY"/>
<dbReference type="OrthoDB" id="361536at2759"/>
<dbReference type="TreeFam" id="TF300576"/>
<dbReference type="Reactome" id="R-BTA-5689880">
    <property type="pathway name" value="Ub-specific processing proteases"/>
</dbReference>
<dbReference type="Reactome" id="R-BTA-8948751">
    <property type="pathway name" value="Regulation of PTEN stability and activity"/>
</dbReference>
<dbReference type="Proteomes" id="UP000009136">
    <property type="component" value="Chromosome 1"/>
</dbReference>
<dbReference type="Bgee" id="ENSBTAG00000005946">
    <property type="expression patterns" value="Expressed in gluteal muscle and 94 other cell types or tissues"/>
</dbReference>
<dbReference type="GO" id="GO:0005829">
    <property type="term" value="C:cytosol"/>
    <property type="evidence" value="ECO:0000318"/>
    <property type="project" value="GO_Central"/>
</dbReference>
<dbReference type="GO" id="GO:0005634">
    <property type="term" value="C:nucleus"/>
    <property type="evidence" value="ECO:0000318"/>
    <property type="project" value="GO_Central"/>
</dbReference>
<dbReference type="GO" id="GO:1904288">
    <property type="term" value="F:BAT3 complex binding"/>
    <property type="evidence" value="ECO:0007669"/>
    <property type="project" value="Ensembl"/>
</dbReference>
<dbReference type="GO" id="GO:0004843">
    <property type="term" value="F:cysteine-type deubiquitinase activity"/>
    <property type="evidence" value="ECO:0000250"/>
    <property type="project" value="UniProtKB"/>
</dbReference>
<dbReference type="GO" id="GO:0004197">
    <property type="term" value="F:cysteine-type endopeptidase activity"/>
    <property type="evidence" value="ECO:0000250"/>
    <property type="project" value="UniProtKB"/>
</dbReference>
<dbReference type="GO" id="GO:1990380">
    <property type="term" value="F:K48-linked deubiquitinase activity"/>
    <property type="evidence" value="ECO:0007669"/>
    <property type="project" value="Ensembl"/>
</dbReference>
<dbReference type="GO" id="GO:0070628">
    <property type="term" value="F:proteasome binding"/>
    <property type="evidence" value="ECO:0007669"/>
    <property type="project" value="Ensembl"/>
</dbReference>
<dbReference type="GO" id="GO:0051087">
    <property type="term" value="F:protein-folding chaperone binding"/>
    <property type="evidence" value="ECO:0007669"/>
    <property type="project" value="Ensembl"/>
</dbReference>
<dbReference type="GO" id="GO:0043130">
    <property type="term" value="F:ubiquitin binding"/>
    <property type="evidence" value="ECO:0000250"/>
    <property type="project" value="UniProtKB"/>
</dbReference>
<dbReference type="GO" id="GO:0031625">
    <property type="term" value="F:ubiquitin protein ligase binding"/>
    <property type="evidence" value="ECO:0007669"/>
    <property type="project" value="Ensembl"/>
</dbReference>
<dbReference type="GO" id="GO:0008270">
    <property type="term" value="F:zinc ion binding"/>
    <property type="evidence" value="ECO:0007669"/>
    <property type="project" value="UniProtKB-KW"/>
</dbReference>
<dbReference type="GO" id="GO:0006914">
    <property type="term" value="P:autophagy"/>
    <property type="evidence" value="ECO:0007669"/>
    <property type="project" value="UniProtKB-KW"/>
</dbReference>
<dbReference type="GO" id="GO:0008283">
    <property type="term" value="P:cell population proliferation"/>
    <property type="evidence" value="ECO:0000250"/>
    <property type="project" value="UniProtKB"/>
</dbReference>
<dbReference type="GO" id="GO:0036506">
    <property type="term" value="P:maintenance of unfolded protein"/>
    <property type="evidence" value="ECO:0007669"/>
    <property type="project" value="Ensembl"/>
</dbReference>
<dbReference type="GO" id="GO:1904294">
    <property type="term" value="P:positive regulation of ERAD pathway"/>
    <property type="evidence" value="ECO:0007669"/>
    <property type="project" value="Ensembl"/>
</dbReference>
<dbReference type="GO" id="GO:0035523">
    <property type="term" value="P:protein K29-linked deubiquitination"/>
    <property type="evidence" value="ECO:0007669"/>
    <property type="project" value="Ensembl"/>
</dbReference>
<dbReference type="GO" id="GO:0044313">
    <property type="term" value="P:protein K6-linked deubiquitination"/>
    <property type="evidence" value="ECO:0007669"/>
    <property type="project" value="Ensembl"/>
</dbReference>
<dbReference type="GO" id="GO:0070536">
    <property type="term" value="P:protein K63-linked deubiquitination"/>
    <property type="evidence" value="ECO:0000250"/>
    <property type="project" value="UniProtKB"/>
</dbReference>
<dbReference type="GO" id="GO:0050821">
    <property type="term" value="P:protein stabilization"/>
    <property type="evidence" value="ECO:0000250"/>
    <property type="project" value="UniProtKB"/>
</dbReference>
<dbReference type="GO" id="GO:0006508">
    <property type="term" value="P:proteolysis"/>
    <property type="evidence" value="ECO:0007669"/>
    <property type="project" value="UniProtKB-KW"/>
</dbReference>
<dbReference type="GO" id="GO:0010506">
    <property type="term" value="P:regulation of autophagy"/>
    <property type="evidence" value="ECO:0000250"/>
    <property type="project" value="UniProtKB"/>
</dbReference>
<dbReference type="GO" id="GO:0006355">
    <property type="term" value="P:regulation of DNA-templated transcription"/>
    <property type="evidence" value="ECO:0000250"/>
    <property type="project" value="UniProtKB"/>
</dbReference>
<dbReference type="GO" id="GO:0031647">
    <property type="term" value="P:regulation of protein stability"/>
    <property type="evidence" value="ECO:0000318"/>
    <property type="project" value="GO_Central"/>
</dbReference>
<dbReference type="CDD" id="cd02658">
    <property type="entry name" value="Peptidase_C19B"/>
    <property type="match status" value="1"/>
</dbReference>
<dbReference type="CDD" id="cd14384">
    <property type="entry name" value="UBA1_UBP13"/>
    <property type="match status" value="1"/>
</dbReference>
<dbReference type="CDD" id="cd14386">
    <property type="entry name" value="UBA2_UBP5"/>
    <property type="match status" value="1"/>
</dbReference>
<dbReference type="FunFam" id="1.10.8.10:FF:000016">
    <property type="entry name" value="Ubiquitin carboxyl-terminal hydrolase"/>
    <property type="match status" value="1"/>
</dbReference>
<dbReference type="FunFam" id="1.10.8.10:FF:000047">
    <property type="entry name" value="Ubiquitin carboxyl-terminal hydrolase"/>
    <property type="match status" value="1"/>
</dbReference>
<dbReference type="FunFam" id="3.30.40.10:FF:000026">
    <property type="entry name" value="Ubiquitin carboxyl-terminal hydrolase"/>
    <property type="match status" value="1"/>
</dbReference>
<dbReference type="FunFam" id="3.30.40.10:FF:000770">
    <property type="entry name" value="Ubiquitin carboxyl-terminal hydrolase"/>
    <property type="match status" value="1"/>
</dbReference>
<dbReference type="FunFam" id="3.90.70.10:FF:000042">
    <property type="entry name" value="Ubiquitin carboxyl-terminal hydrolase"/>
    <property type="match status" value="1"/>
</dbReference>
<dbReference type="FunFam" id="3.90.70.10:FF:000063">
    <property type="entry name" value="Ubiquitin carboxyl-terminal hydrolase"/>
    <property type="match status" value="1"/>
</dbReference>
<dbReference type="Gene3D" id="3.90.70.10">
    <property type="entry name" value="Cysteine proteinases"/>
    <property type="match status" value="2"/>
</dbReference>
<dbReference type="Gene3D" id="1.10.8.10">
    <property type="entry name" value="DNA helicase RuvA subunit, C-terminal domain"/>
    <property type="match status" value="2"/>
</dbReference>
<dbReference type="Gene3D" id="3.30.40.10">
    <property type="entry name" value="Zinc/RING finger domain, C3HC4 (zinc finger)"/>
    <property type="match status" value="2"/>
</dbReference>
<dbReference type="InterPro" id="IPR038765">
    <property type="entry name" value="Papain-like_cys_pep_sf"/>
</dbReference>
<dbReference type="InterPro" id="IPR001394">
    <property type="entry name" value="Peptidase_C19_UCH"/>
</dbReference>
<dbReference type="InterPro" id="IPR050185">
    <property type="entry name" value="Ub_carboxyl-term_hydrolase"/>
</dbReference>
<dbReference type="InterPro" id="IPR015940">
    <property type="entry name" value="UBA"/>
</dbReference>
<dbReference type="InterPro" id="IPR009060">
    <property type="entry name" value="UBA-like_sf"/>
</dbReference>
<dbReference type="InterPro" id="IPR016652">
    <property type="entry name" value="Ubiquitinyl_hydrolase"/>
</dbReference>
<dbReference type="InterPro" id="IPR041432">
    <property type="entry name" value="UBP13_Znf-UBP_var"/>
</dbReference>
<dbReference type="InterPro" id="IPR018200">
    <property type="entry name" value="USP_CS"/>
</dbReference>
<dbReference type="InterPro" id="IPR028889">
    <property type="entry name" value="USP_dom"/>
</dbReference>
<dbReference type="InterPro" id="IPR013083">
    <property type="entry name" value="Znf_RING/FYVE/PHD"/>
</dbReference>
<dbReference type="InterPro" id="IPR001607">
    <property type="entry name" value="Znf_UBP"/>
</dbReference>
<dbReference type="PANTHER" id="PTHR21646">
    <property type="entry name" value="UBIQUITIN CARBOXYL-TERMINAL HYDROLASE"/>
    <property type="match status" value="1"/>
</dbReference>
<dbReference type="PANTHER" id="PTHR21646:SF105">
    <property type="entry name" value="UBIQUITIN CARBOXYL-TERMINAL HYDROLASE 13"/>
    <property type="match status" value="1"/>
</dbReference>
<dbReference type="Pfam" id="PF22562">
    <property type="entry name" value="UBA_7"/>
    <property type="match status" value="2"/>
</dbReference>
<dbReference type="Pfam" id="PF00443">
    <property type="entry name" value="UCH"/>
    <property type="match status" value="1"/>
</dbReference>
<dbReference type="Pfam" id="PF02148">
    <property type="entry name" value="zf-UBP"/>
    <property type="match status" value="1"/>
</dbReference>
<dbReference type="Pfam" id="PF17807">
    <property type="entry name" value="zf-UBP_var"/>
    <property type="match status" value="1"/>
</dbReference>
<dbReference type="PIRSF" id="PIRSF016308">
    <property type="entry name" value="UBP"/>
    <property type="match status" value="1"/>
</dbReference>
<dbReference type="SMART" id="SM00165">
    <property type="entry name" value="UBA"/>
    <property type="match status" value="2"/>
</dbReference>
<dbReference type="SMART" id="SM00290">
    <property type="entry name" value="ZnF_UBP"/>
    <property type="match status" value="1"/>
</dbReference>
<dbReference type="SUPFAM" id="SSF54001">
    <property type="entry name" value="Cysteine proteinases"/>
    <property type="match status" value="1"/>
</dbReference>
<dbReference type="SUPFAM" id="SSF57850">
    <property type="entry name" value="RING/U-box"/>
    <property type="match status" value="1"/>
</dbReference>
<dbReference type="SUPFAM" id="SSF46934">
    <property type="entry name" value="UBA-like"/>
    <property type="match status" value="1"/>
</dbReference>
<dbReference type="PROSITE" id="PS50030">
    <property type="entry name" value="UBA"/>
    <property type="match status" value="2"/>
</dbReference>
<dbReference type="PROSITE" id="PS00972">
    <property type="entry name" value="USP_1"/>
    <property type="match status" value="1"/>
</dbReference>
<dbReference type="PROSITE" id="PS00973">
    <property type="entry name" value="USP_2"/>
    <property type="match status" value="1"/>
</dbReference>
<dbReference type="PROSITE" id="PS50235">
    <property type="entry name" value="USP_3"/>
    <property type="match status" value="1"/>
</dbReference>
<dbReference type="PROSITE" id="PS50271">
    <property type="entry name" value="ZF_UBP"/>
    <property type="match status" value="1"/>
</dbReference>
<gene>
    <name type="primary">USP13</name>
</gene>
<keyword id="KW-0072">Autophagy</keyword>
<keyword id="KW-0963">Cytoplasm</keyword>
<keyword id="KW-0378">Hydrolase</keyword>
<keyword id="KW-1017">Isopeptide bond</keyword>
<keyword id="KW-0479">Metal-binding</keyword>
<keyword id="KW-0597">Phosphoprotein</keyword>
<keyword id="KW-0645">Protease</keyword>
<keyword id="KW-1185">Reference proteome</keyword>
<keyword id="KW-0677">Repeat</keyword>
<keyword id="KW-0788">Thiol protease</keyword>
<keyword id="KW-0832">Ubl conjugation</keyword>
<keyword id="KW-0833">Ubl conjugation pathway</keyword>
<keyword id="KW-0862">Zinc</keyword>
<keyword id="KW-0863">Zinc-finger</keyword>
<sequence>MQRRGALFGMPGGSGSRKMAAGDIGELLVPHMPTIRVPRSGDRVYKNECAFSYDSPNSEGGLYVCMNTFLAFGREHVERHFRKTGQSVYMHLKRHVREKVRGASGGALPKRRNSKMFLDLDTDDDLNSDDYEYEDEAKLVIFPDHYEIALPNIEELPALVTIACDAVLSSKSPYRKQDPDTWENELPVSKYANNLTQLDNGVRIPPSGWKCARCDLRENLWLNLTDGSVLCGKWFFDSSGGNGHALEHYRDTGYPLAVKLGTITPDGADVYSFQEEEAVLDPHLAKHLAHFGIDMLHMHGTENGLQDNDIKPRVSEWEVIQETGTKLKPMYGPGYTGLKNLGNSCYLSSVMQAIFSIPEFQRAYVGNLPRIFDYSPLDPTQDFNTQMTKLGHGLLSGQYSKPPVKSELIEQVMKEEHKPQQNGISPRMFKAFVSKSHPEFSSNRQQDAQEFFLHLVNLVERNRIGSENPSDVFRFLVEERIQCCQTRKVRYTERVDYLMQLPVAMEAATNKDELIAYELTRREAESNRRPLPELVRAKIPFSACLQAFSEPENVDDFWSSALQAKSAGVKTSRFASFPEYLVVQIKKFTFGLDWVPKKFDVSVDMPDLLDINHLRARGLQPGEEELPDISPPIVIPDDSKDRLMTQLIDPSDIDESSVMQLAEMGFPLEACRKAVYFTGNMGAEVAFNWIVVHMEEPDFAEPLTMPGYGGAASAGASVFGATGLDNQPPEETVAIITSMGFHRNQAIQALRATNSNLERALDWIFSHPEFEEDSDFVIEMENNANANIVSEAKPEGPRVKDGSGMYELFAFISHMGTSTMSGHYVCHIKKEGRWVIYNDHKVCASERPPKDLGYMYFYRRIPS</sequence>
<proteinExistence type="inferred from homology"/>
<organism>
    <name type="scientific">Bos taurus</name>
    <name type="common">Bovine</name>
    <dbReference type="NCBI Taxonomy" id="9913"/>
    <lineage>
        <taxon>Eukaryota</taxon>
        <taxon>Metazoa</taxon>
        <taxon>Chordata</taxon>
        <taxon>Craniata</taxon>
        <taxon>Vertebrata</taxon>
        <taxon>Euteleostomi</taxon>
        <taxon>Mammalia</taxon>
        <taxon>Eutheria</taxon>
        <taxon>Laurasiatheria</taxon>
        <taxon>Artiodactyla</taxon>
        <taxon>Ruminantia</taxon>
        <taxon>Pecora</taxon>
        <taxon>Bovidae</taxon>
        <taxon>Bovinae</taxon>
        <taxon>Bos</taxon>
    </lineage>
</organism>
<name>UBP13_BOVIN</name>
<feature type="chain" id="PRO_0000418010" description="Ubiquitin carboxyl-terminal hydrolase 13">
    <location>
        <begin position="1"/>
        <end position="863"/>
    </location>
</feature>
<feature type="domain" description="USP">
    <location>
        <begin position="336"/>
        <end position="861"/>
    </location>
</feature>
<feature type="domain" description="UBA 1" evidence="3">
    <location>
        <begin position="652"/>
        <end position="693"/>
    </location>
</feature>
<feature type="domain" description="UBA 2" evidence="3">
    <location>
        <begin position="727"/>
        <end position="767"/>
    </location>
</feature>
<feature type="zinc finger region" description="UBP-type; degenerate" evidence="4">
    <location>
        <begin position="187"/>
        <end position="295"/>
    </location>
</feature>
<feature type="active site" description="Nucleophile" evidence="5 6">
    <location>
        <position position="345"/>
    </location>
</feature>
<feature type="active site" description="Proton acceptor" evidence="5 6">
    <location>
        <position position="823"/>
    </location>
</feature>
<feature type="binding site" evidence="4">
    <location>
        <position position="211"/>
    </location>
    <ligand>
        <name>Zn(2+)</name>
        <dbReference type="ChEBI" id="CHEBI:29105"/>
    </ligand>
</feature>
<feature type="binding site" evidence="4">
    <location>
        <position position="214"/>
    </location>
    <ligand>
        <name>Zn(2+)</name>
        <dbReference type="ChEBI" id="CHEBI:29105"/>
    </ligand>
</feature>
<feature type="binding site" evidence="4">
    <location>
        <position position="231"/>
    </location>
    <ligand>
        <name>Zn(2+)</name>
        <dbReference type="ChEBI" id="CHEBI:29105"/>
    </ligand>
</feature>
<feature type="binding site" evidence="4">
    <location>
        <position position="244"/>
    </location>
    <ligand>
        <name>Zn(2+)</name>
        <dbReference type="ChEBI" id="CHEBI:29105"/>
    </ligand>
</feature>
<feature type="modified residue" description="Phosphoserine" evidence="2">
    <location>
        <position position="114"/>
    </location>
</feature>
<feature type="modified residue" description="Phosphothreonine" evidence="2">
    <location>
        <position position="122"/>
    </location>
</feature>
<feature type="cross-link" description="Glycyl lysine isopeptide (Lys-Gly) (interchain with G-Cter in SUMO2)" evidence="2">
    <location>
        <position position="311"/>
    </location>
</feature>
<feature type="cross-link" description="Glycyl lysine isopeptide (Lys-Gly) (interchain with G-Cter in SUMO2)" evidence="2">
    <location>
        <position position="405"/>
    </location>
</feature>
<evidence type="ECO:0000250" key="1"/>
<evidence type="ECO:0000250" key="2">
    <source>
        <dbReference type="UniProtKB" id="Q92995"/>
    </source>
</evidence>
<evidence type="ECO:0000255" key="3">
    <source>
        <dbReference type="PROSITE-ProRule" id="PRU00212"/>
    </source>
</evidence>
<evidence type="ECO:0000255" key="4">
    <source>
        <dbReference type="PROSITE-ProRule" id="PRU00502"/>
    </source>
</evidence>
<evidence type="ECO:0000255" key="5">
    <source>
        <dbReference type="PROSITE-ProRule" id="PRU10092"/>
    </source>
</evidence>
<evidence type="ECO:0000255" key="6">
    <source>
        <dbReference type="PROSITE-ProRule" id="PRU10093"/>
    </source>
</evidence>
<evidence type="ECO:0000305" key="7"/>
<reference key="1">
    <citation type="journal article" date="2009" name="Genome Biol.">
        <title>A whole-genome assembly of the domestic cow, Bos taurus.</title>
        <authorList>
            <person name="Zimin A.V."/>
            <person name="Delcher A.L."/>
            <person name="Florea L."/>
            <person name="Kelley D.R."/>
            <person name="Schatz M.C."/>
            <person name="Puiu D."/>
            <person name="Hanrahan F."/>
            <person name="Pertea G."/>
            <person name="Van Tassell C.P."/>
            <person name="Sonstegard T.S."/>
            <person name="Marcais G."/>
            <person name="Roberts M."/>
            <person name="Subramanian P."/>
            <person name="Yorke J.A."/>
            <person name="Salzberg S.L."/>
        </authorList>
    </citation>
    <scope>NUCLEOTIDE SEQUENCE [LARGE SCALE GENOMIC DNA]</scope>
    <source>
        <strain>Hereford</strain>
    </source>
</reference>